<gene>
    <name evidence="13" type="primary">dcap-1</name>
    <name evidence="13" type="ORF">Y55F3AM.12</name>
</gene>
<organism evidence="12">
    <name type="scientific">Caenorhabditis elegans</name>
    <dbReference type="NCBI Taxonomy" id="6239"/>
    <lineage>
        <taxon>Eukaryota</taxon>
        <taxon>Metazoa</taxon>
        <taxon>Ecdysozoa</taxon>
        <taxon>Nematoda</taxon>
        <taxon>Chromadorea</taxon>
        <taxon>Rhabditida</taxon>
        <taxon>Rhabditina</taxon>
        <taxon>Rhabditomorpha</taxon>
        <taxon>Rhabditoidea</taxon>
        <taxon>Rhabditidae</taxon>
        <taxon>Peloderinae</taxon>
        <taxon>Caenorhabditis</taxon>
    </lineage>
</organism>
<reference key="1">
    <citation type="journal article" date="1998" name="Science">
        <title>Genome sequence of the nematode C. elegans: a platform for investigating biology.</title>
        <authorList>
            <consortium name="The C. elegans sequencing consortium"/>
        </authorList>
    </citation>
    <scope>NUCLEOTIDE SEQUENCE [LARGE SCALE GENOMIC DNA]</scope>
    <source>
        <strain evidence="12">Bristol N2</strain>
    </source>
</reference>
<reference key="2">
    <citation type="journal article" date="2005" name="Mol. Cell. Biol.">
        <title>Dcp2 Decaps m2,2,7GpppN-capped RNAs, and its activity is sequence and context dependent.</title>
        <authorList>
            <person name="Cohen L.S."/>
            <person name="Mikhli C."/>
            <person name="Jiao X."/>
            <person name="Kiledjian M."/>
            <person name="Kunkel G."/>
            <person name="Davis R.E."/>
        </authorList>
    </citation>
    <scope>FUNCTION</scope>
</reference>
<reference key="3">
    <citation type="journal article" date="2006" name="Mol. Biol. Cell">
        <title>CAR-1, a protein that localizes with the mRNA decapping component DCAP-1, is required for cytokinesis and ER organization in Caenorhabditis elegans embryos.</title>
        <authorList>
            <person name="Squirrell J.M."/>
            <person name="Eggers Z.T."/>
            <person name="Luedke N."/>
            <person name="Saari B."/>
            <person name="Grimson A."/>
            <person name="Lyons G.E."/>
            <person name="Anderson P."/>
            <person name="White J.G."/>
        </authorList>
    </citation>
    <scope>SUBCELLULAR LOCATION</scope>
    <scope>DEVELOPMENTAL STAGE</scope>
</reference>
<reference key="4">
    <citation type="journal article" date="2014" name="PLoS ONE">
        <title>Diverse functions of mRNA metabolism factors in stress defense and aging of Caenorhabditis elegans.</title>
        <authorList>
            <person name="Rousakis A."/>
            <person name="Vlanti A."/>
            <person name="Borbolis F."/>
            <person name="Roumelioti F."/>
            <person name="Kapetanou M."/>
            <person name="Syntichaki P."/>
        </authorList>
    </citation>
    <scope>FUNCTION</scope>
    <scope>DISRUPTION PHENOTYPE</scope>
</reference>
<reference key="5">
    <citation type="journal article" date="2017" name="Biochem. Biophys. Res. Commun.">
        <title>The C. elegans mRNA decapping enzyme shapes morphology of cilia.</title>
        <authorList>
            <person name="Adachi T."/>
            <person name="Nagahama K."/>
            <person name="Izumi S."/>
        </authorList>
    </citation>
    <scope>FUNCTION</scope>
</reference>
<reference key="6">
    <citation type="journal article" date="2017" name="Open Biol.">
        <title>Neuronal function of the mRNA decapping complex determines survival of Caenorhabditis elegans at high temperature through temporal regulation of heterochronic gene expression.</title>
        <authorList>
            <person name="Borbolis F."/>
            <person name="Flessa C.M."/>
            <person name="Roumelioti F."/>
            <person name="Diallinas G."/>
            <person name="Stravopodis D.J."/>
            <person name="Syntichaki P."/>
        </authorList>
    </citation>
    <scope>FUNCTION</scope>
</reference>
<reference key="7">
    <citation type="journal article" date="2020" name="Curr. Biol.">
        <title>The mRNA Decay Factor CAR-1/LSM14 Regulates Axon Regeneration via Mitochondrial Calcium Dynamics.</title>
        <authorList>
            <person name="Tang N.H."/>
            <person name="Kim K.W."/>
            <person name="Xu S."/>
            <person name="Blazie S.M."/>
            <person name="Yee B.A."/>
            <person name="Yeo G.W."/>
            <person name="Jin Y."/>
            <person name="Chisholm A.D."/>
        </authorList>
    </citation>
    <scope>FUNCTION</scope>
    <scope>SUBCELLULAR LOCATION</scope>
    <scope>TISSUE SPECIFICITY</scope>
</reference>
<reference key="8">
    <citation type="journal article" date="2020" name="Elife">
        <title>mRNA decapping is an evolutionarily conserved modulator of neuroendocrine signaling that controls development and ageing.</title>
        <authorList>
            <person name="Borbolis F."/>
            <person name="Rallis J."/>
            <person name="Kanatouris G."/>
            <person name="Kokla N."/>
            <person name="Karamalegkos A."/>
            <person name="Vasileiou C."/>
            <person name="Vakaloglou K.M."/>
            <person name="Diallinas G."/>
            <person name="Stravopodis D.J."/>
            <person name="Zervas C.G."/>
            <person name="Syntichaki P."/>
        </authorList>
    </citation>
    <scope>FUNCTION</scope>
</reference>
<proteinExistence type="evidence at protein level"/>
<keyword id="KW-0963">Cytoplasm</keyword>
<keyword id="KW-0507">mRNA processing</keyword>
<keyword id="KW-0866">Nonsense-mediated mRNA decay</keyword>
<keyword id="KW-1185">Reference proteome</keyword>
<keyword id="KW-0694">RNA-binding</keyword>
<protein>
    <recommendedName>
        <fullName evidence="13">mRNA-decapping enzyme 1</fullName>
    </recommendedName>
</protein>
<comment type="function">
    <text evidence="1 3 6 7 8 9 11">Component of the decapping complex necessary for the degradation of mRNAs, both in normal mRNA turnover and in nonsense-mediated mRNA decay (By similarity). In contrast to orthologs, does not possess decapping activity and does not remove the 7-methyl guanine cap structure from mRNA molecules (PubMed:16199859). In the nervous system, negatively regulates the expression of insulin-like peptide ins-7, which in turn promotes longevity (PubMed:32366357). This may in part be through promoting the activity of daf-16 in distal tissues (PubMed:32366357). Required for the developmental axon guidance and regrowth of PLM touch receptor neurons (PubMed:31983639). In ADL sensory neurons, plays a role in ciliary shape formation (PubMed:28887031). Acts in neurons to promote larval survival at high temperatures by negatively regulating lin-14 expression (Probable) (PubMed:28250105).</text>
</comment>
<comment type="subunit">
    <text evidence="1">May be a component of the decapping complex composed of dcap-1 and dcap-2.</text>
</comment>
<comment type="subcellular location">
    <subcellularLocation>
        <location evidence="4">Cytoplasm</location>
    </subcellularLocation>
    <subcellularLocation>
        <location evidence="4 8">Cytoplasmic granule</location>
    </subcellularLocation>
    <text evidence="4 8">Diffusely localized in the cytoplasm, but accumulates in puncta during pronuclear migration in embryos (PubMed:16267265). After pronuclear migration, accumulates in P-granules which segregated to the posterior cell, and smaller puncta scattered in the cytoplasm (PubMed:16267265). Localizes to cytoplasmic puncta in neuronal cell bodies of neurons such as touch receptor neurons (PubMed:31983639). In some cytoplasmic puncta in touch receptor neurons, co-localizes with car-1 (PubMed:31983639).</text>
</comment>
<comment type="tissue specificity">
    <text evidence="8">Expressed in neurons including touch receptor neurons and motor neurons.</text>
</comment>
<comment type="developmental stage">
    <text evidence="4">Expressed in embryos (at protein level).</text>
</comment>
<comment type="disruption phenotype">
    <text evidence="5">Double RNAi-mediated knockdown with dcap-2 reduces survival at 20 degrees Celsius.</text>
</comment>
<comment type="similarity">
    <text evidence="10">Belongs to the DCP1 family.</text>
</comment>
<dbReference type="EMBL" id="BX284604">
    <property type="protein sequence ID" value="CCD74070.1"/>
    <property type="molecule type" value="Genomic_DNA"/>
</dbReference>
<dbReference type="RefSeq" id="NP_500030.1">
    <property type="nucleotide sequence ID" value="NM_067629.7"/>
</dbReference>
<dbReference type="SMR" id="Q9N363"/>
<dbReference type="FunCoup" id="Q9N363">
    <property type="interactions" value="255"/>
</dbReference>
<dbReference type="IntAct" id="Q9N363">
    <property type="interactions" value="1"/>
</dbReference>
<dbReference type="STRING" id="6239.Y55F3AM.12.1"/>
<dbReference type="PaxDb" id="6239-Y55F3AM.12"/>
<dbReference type="PeptideAtlas" id="Q9N363"/>
<dbReference type="EnsemblMetazoa" id="Y55F3AM.12.1">
    <property type="protein sequence ID" value="Y55F3AM.12.1"/>
    <property type="gene ID" value="WBGene00021929"/>
</dbReference>
<dbReference type="GeneID" id="176924"/>
<dbReference type="KEGG" id="cel:CELE_Y55F3AM.12"/>
<dbReference type="UCSC" id="Y55F3AM.12.1">
    <property type="organism name" value="c. elegans"/>
</dbReference>
<dbReference type="AGR" id="WB:WBGene00021929"/>
<dbReference type="CTD" id="176924"/>
<dbReference type="WormBase" id="Y55F3AM.12">
    <property type="protein sequence ID" value="CE22543"/>
    <property type="gene ID" value="WBGene00021929"/>
    <property type="gene designation" value="dcap-1"/>
</dbReference>
<dbReference type="eggNOG" id="KOG2868">
    <property type="taxonomic scope" value="Eukaryota"/>
</dbReference>
<dbReference type="GeneTree" id="ENSGT00940000172151"/>
<dbReference type="HOGENOM" id="CLU_829590_0_0_1"/>
<dbReference type="InParanoid" id="Q9N363"/>
<dbReference type="OMA" id="HLMQTDD"/>
<dbReference type="OrthoDB" id="440673at2759"/>
<dbReference type="PhylomeDB" id="Q9N363"/>
<dbReference type="Reactome" id="R-CEL-430039">
    <property type="pathway name" value="mRNA decay by 5' to 3' exoribonuclease"/>
</dbReference>
<dbReference type="Reactome" id="R-CEL-450385">
    <property type="pathway name" value="Butyrate Response Factor 1 (BRF1) binds and destabilizes mRNA"/>
</dbReference>
<dbReference type="Reactome" id="R-CEL-450513">
    <property type="pathway name" value="Tristetraprolin (TTP, ZFP36) binds and destabilizes mRNA"/>
</dbReference>
<dbReference type="CD-CODE" id="73A75392">
    <property type="entry name" value="P-granule"/>
</dbReference>
<dbReference type="CD-CODE" id="EE0382A7">
    <property type="entry name" value="P-body"/>
</dbReference>
<dbReference type="PRO" id="PR:Q9N363"/>
<dbReference type="Proteomes" id="UP000001940">
    <property type="component" value="Chromosome IV"/>
</dbReference>
<dbReference type="Bgee" id="WBGene00021929">
    <property type="expression patterns" value="Expressed in embryo and 4 other cell types or tissues"/>
</dbReference>
<dbReference type="GO" id="GO:0043186">
    <property type="term" value="C:P granule"/>
    <property type="evidence" value="ECO:0000314"/>
    <property type="project" value="WormBase"/>
</dbReference>
<dbReference type="GO" id="GO:0000932">
    <property type="term" value="C:P-body"/>
    <property type="evidence" value="ECO:0000314"/>
    <property type="project" value="WormBase"/>
</dbReference>
<dbReference type="GO" id="GO:0008047">
    <property type="term" value="F:enzyme activator activity"/>
    <property type="evidence" value="ECO:0007669"/>
    <property type="project" value="InterPro"/>
</dbReference>
<dbReference type="GO" id="GO:0003729">
    <property type="term" value="F:mRNA binding"/>
    <property type="evidence" value="ECO:0000318"/>
    <property type="project" value="GO_Central"/>
</dbReference>
<dbReference type="GO" id="GO:0031087">
    <property type="term" value="P:deadenylation-independent decapping of nuclear-transcribed mRNA"/>
    <property type="evidence" value="ECO:0000318"/>
    <property type="project" value="GO_Central"/>
</dbReference>
<dbReference type="GO" id="GO:0008340">
    <property type="term" value="P:determination of adult lifespan"/>
    <property type="evidence" value="ECO:0000315"/>
    <property type="project" value="WormBase"/>
</dbReference>
<dbReference type="GO" id="GO:0006397">
    <property type="term" value="P:mRNA processing"/>
    <property type="evidence" value="ECO:0007669"/>
    <property type="project" value="UniProtKB-KW"/>
</dbReference>
<dbReference type="GO" id="GO:0002119">
    <property type="term" value="P:nematode larval development"/>
    <property type="evidence" value="ECO:0000315"/>
    <property type="project" value="WormBase"/>
</dbReference>
<dbReference type="GO" id="GO:0000184">
    <property type="term" value="P:nuclear-transcribed mRNA catabolic process, nonsense-mediated decay"/>
    <property type="evidence" value="ECO:0007669"/>
    <property type="project" value="UniProtKB-KW"/>
</dbReference>
<dbReference type="GO" id="GO:0040012">
    <property type="term" value="P:regulation of locomotion"/>
    <property type="evidence" value="ECO:0000315"/>
    <property type="project" value="WormBase"/>
</dbReference>
<dbReference type="GO" id="GO:0022414">
    <property type="term" value="P:reproductive process"/>
    <property type="evidence" value="ECO:0000315"/>
    <property type="project" value="WormBase"/>
</dbReference>
<dbReference type="GO" id="GO:0009408">
    <property type="term" value="P:response to heat"/>
    <property type="evidence" value="ECO:0000315"/>
    <property type="project" value="WormBase"/>
</dbReference>
<dbReference type="GO" id="GO:0006979">
    <property type="term" value="P:response to oxidative stress"/>
    <property type="evidence" value="ECO:0000315"/>
    <property type="project" value="WormBase"/>
</dbReference>
<dbReference type="GO" id="GO:0009411">
    <property type="term" value="P:response to UV"/>
    <property type="evidence" value="ECO:0000315"/>
    <property type="project" value="WormBase"/>
</dbReference>
<dbReference type="CDD" id="cd09804">
    <property type="entry name" value="Dcp1"/>
    <property type="match status" value="1"/>
</dbReference>
<dbReference type="Gene3D" id="6.10.140.2030">
    <property type="match status" value="1"/>
</dbReference>
<dbReference type="Gene3D" id="2.30.29.30">
    <property type="entry name" value="Pleckstrin-homology domain (PH domain)/Phosphotyrosine-binding domain (PTB)"/>
    <property type="match status" value="1"/>
</dbReference>
<dbReference type="InterPro" id="IPR010334">
    <property type="entry name" value="Dcp1"/>
</dbReference>
<dbReference type="InterPro" id="IPR031953">
    <property type="entry name" value="mRNA_decap_C"/>
</dbReference>
<dbReference type="InterPro" id="IPR011993">
    <property type="entry name" value="PH-like_dom_sf"/>
</dbReference>
<dbReference type="PANTHER" id="PTHR16290:SF0">
    <property type="entry name" value="DECAPPING PROTEIN 1, ISOFORM A"/>
    <property type="match status" value="1"/>
</dbReference>
<dbReference type="PANTHER" id="PTHR16290">
    <property type="entry name" value="TRANSCRIPTION FACTOR SMIF DECAPPING ENZYME DCP1"/>
    <property type="match status" value="1"/>
</dbReference>
<dbReference type="Pfam" id="PF06058">
    <property type="entry name" value="DCP1"/>
    <property type="match status" value="1"/>
</dbReference>
<dbReference type="Pfam" id="PF16741">
    <property type="entry name" value="mRNA_decap_C"/>
    <property type="match status" value="1"/>
</dbReference>
<dbReference type="SUPFAM" id="SSF50729">
    <property type="entry name" value="PH domain-like"/>
    <property type="match status" value="1"/>
</dbReference>
<accession>Q9N363</accession>
<name>DCP1_CAEEL</name>
<evidence type="ECO:0000250" key="1">
    <source>
        <dbReference type="UniProtKB" id="Q12517"/>
    </source>
</evidence>
<evidence type="ECO:0000256" key="2">
    <source>
        <dbReference type="SAM" id="MobiDB-lite"/>
    </source>
</evidence>
<evidence type="ECO:0000269" key="3">
    <source>
    </source>
</evidence>
<evidence type="ECO:0000269" key="4">
    <source>
    </source>
</evidence>
<evidence type="ECO:0000269" key="5">
    <source>
    </source>
</evidence>
<evidence type="ECO:0000269" key="6">
    <source>
    </source>
</evidence>
<evidence type="ECO:0000269" key="7">
    <source>
    </source>
</evidence>
<evidence type="ECO:0000269" key="8">
    <source>
    </source>
</evidence>
<evidence type="ECO:0000269" key="9">
    <source>
    </source>
</evidence>
<evidence type="ECO:0000305" key="10"/>
<evidence type="ECO:0000305" key="11">
    <source>
    </source>
</evidence>
<evidence type="ECO:0000312" key="12">
    <source>
        <dbReference type="Proteomes" id="UP000001940"/>
    </source>
</evidence>
<evidence type="ECO:0000312" key="13">
    <source>
        <dbReference type="WormBase" id="Y55F3AM.12"/>
    </source>
</evidence>
<feature type="chain" id="PRO_0000451759" description="mRNA-decapping enzyme 1">
    <location>
        <begin position="1"/>
        <end position="332"/>
    </location>
</feature>
<feature type="region of interest" description="Disordered" evidence="2">
    <location>
        <begin position="141"/>
        <end position="175"/>
    </location>
</feature>
<feature type="compositionally biased region" description="Low complexity" evidence="2">
    <location>
        <begin position="141"/>
        <end position="173"/>
    </location>
</feature>
<sequence>MSDAKKKAAAELAAKNLAQLQKIDIAASKILDKMPFAAIYHIDAARKEWNQSNCEGTFFVYQRADRPYFSFLIANRNDPSDFIEPLTLNHILRHDGNFIYFYKDLASIQALWFHQIDDAQKIYNLLQKLVNRLKGSTTEQARAAKAASEAPQASVPAPTQAPAAPAQAPQMAPQAPPKVDLLQLIKSAQNPPQKSAATIEQMPPMLQKLMLKEPGAAMSADELEKDLIKSAKPHRNHLLQEFTNSTSAISLAAVSTKPLHGSEGDVESDIAEGEILEPLDASFVVGSGEQTPVLNKEQFISAIAHLMQTDDEFVSQIHQAYVSALNRRLNID</sequence>